<name>MURC_CAMJD</name>
<comment type="function">
    <text evidence="1">Cell wall formation.</text>
</comment>
<comment type="catalytic activity">
    <reaction evidence="1">
        <text>UDP-N-acetyl-alpha-D-muramate + L-alanine + ATP = UDP-N-acetyl-alpha-D-muramoyl-L-alanine + ADP + phosphate + H(+)</text>
        <dbReference type="Rhea" id="RHEA:23372"/>
        <dbReference type="ChEBI" id="CHEBI:15378"/>
        <dbReference type="ChEBI" id="CHEBI:30616"/>
        <dbReference type="ChEBI" id="CHEBI:43474"/>
        <dbReference type="ChEBI" id="CHEBI:57972"/>
        <dbReference type="ChEBI" id="CHEBI:70757"/>
        <dbReference type="ChEBI" id="CHEBI:83898"/>
        <dbReference type="ChEBI" id="CHEBI:456216"/>
        <dbReference type="EC" id="6.3.2.8"/>
    </reaction>
</comment>
<comment type="pathway">
    <text evidence="1">Cell wall biogenesis; peptidoglycan biosynthesis.</text>
</comment>
<comment type="subcellular location">
    <subcellularLocation>
        <location evidence="1">Cytoplasm</location>
    </subcellularLocation>
</comment>
<comment type="similarity">
    <text evidence="1">Belongs to the MurCDEF family.</text>
</comment>
<accession>A7H2V3</accession>
<feature type="chain" id="PRO_0000336818" description="UDP-N-acetylmuramate--L-alanine ligase">
    <location>
        <begin position="1"/>
        <end position="431"/>
    </location>
</feature>
<feature type="binding site" evidence="1">
    <location>
        <begin position="108"/>
        <end position="114"/>
    </location>
    <ligand>
        <name>ATP</name>
        <dbReference type="ChEBI" id="CHEBI:30616"/>
    </ligand>
</feature>
<reference key="1">
    <citation type="submission" date="2007-07" db="EMBL/GenBank/DDBJ databases">
        <title>Complete genome sequence of Campylobacter jejuni subsp doylei 269.97 isolated from human blood.</title>
        <authorList>
            <person name="Fouts D.E."/>
            <person name="Mongodin E.F."/>
            <person name="Puiu D."/>
            <person name="Sebastian Y."/>
            <person name="Miller W.G."/>
            <person name="Mandrell R.E."/>
            <person name="Lastovica A.J."/>
            <person name="Nelson K.E."/>
        </authorList>
    </citation>
    <scope>NUCLEOTIDE SEQUENCE [LARGE SCALE GENOMIC DNA]</scope>
    <source>
        <strain>ATCC BAA-1458 / RM4099 / 269.97</strain>
    </source>
</reference>
<dbReference type="EC" id="6.3.2.8" evidence="1"/>
<dbReference type="EMBL" id="CP000768">
    <property type="protein sequence ID" value="ABS43199.1"/>
    <property type="molecule type" value="Genomic_DNA"/>
</dbReference>
<dbReference type="SMR" id="A7H2V3"/>
<dbReference type="KEGG" id="cjd:JJD26997_0680"/>
<dbReference type="HOGENOM" id="CLU_028104_2_2_7"/>
<dbReference type="UniPathway" id="UPA00219"/>
<dbReference type="Proteomes" id="UP000002302">
    <property type="component" value="Chromosome"/>
</dbReference>
<dbReference type="GO" id="GO:0005737">
    <property type="term" value="C:cytoplasm"/>
    <property type="evidence" value="ECO:0007669"/>
    <property type="project" value="UniProtKB-SubCell"/>
</dbReference>
<dbReference type="GO" id="GO:0005524">
    <property type="term" value="F:ATP binding"/>
    <property type="evidence" value="ECO:0007669"/>
    <property type="project" value="UniProtKB-UniRule"/>
</dbReference>
<dbReference type="GO" id="GO:0008763">
    <property type="term" value="F:UDP-N-acetylmuramate-L-alanine ligase activity"/>
    <property type="evidence" value="ECO:0007669"/>
    <property type="project" value="UniProtKB-UniRule"/>
</dbReference>
<dbReference type="GO" id="GO:0051301">
    <property type="term" value="P:cell division"/>
    <property type="evidence" value="ECO:0007669"/>
    <property type="project" value="UniProtKB-KW"/>
</dbReference>
<dbReference type="GO" id="GO:0071555">
    <property type="term" value="P:cell wall organization"/>
    <property type="evidence" value="ECO:0007669"/>
    <property type="project" value="UniProtKB-KW"/>
</dbReference>
<dbReference type="GO" id="GO:0009252">
    <property type="term" value="P:peptidoglycan biosynthetic process"/>
    <property type="evidence" value="ECO:0007669"/>
    <property type="project" value="UniProtKB-UniRule"/>
</dbReference>
<dbReference type="GO" id="GO:0008360">
    <property type="term" value="P:regulation of cell shape"/>
    <property type="evidence" value="ECO:0007669"/>
    <property type="project" value="UniProtKB-KW"/>
</dbReference>
<dbReference type="Gene3D" id="3.90.190.20">
    <property type="entry name" value="Mur ligase, C-terminal domain"/>
    <property type="match status" value="1"/>
</dbReference>
<dbReference type="Gene3D" id="3.40.1190.10">
    <property type="entry name" value="Mur-like, catalytic domain"/>
    <property type="match status" value="1"/>
</dbReference>
<dbReference type="Gene3D" id="3.40.50.720">
    <property type="entry name" value="NAD(P)-binding Rossmann-like Domain"/>
    <property type="match status" value="1"/>
</dbReference>
<dbReference type="HAMAP" id="MF_00046">
    <property type="entry name" value="MurC"/>
    <property type="match status" value="1"/>
</dbReference>
<dbReference type="InterPro" id="IPR036565">
    <property type="entry name" value="Mur-like_cat_sf"/>
</dbReference>
<dbReference type="InterPro" id="IPR004101">
    <property type="entry name" value="Mur_ligase_C"/>
</dbReference>
<dbReference type="InterPro" id="IPR036615">
    <property type="entry name" value="Mur_ligase_C_dom_sf"/>
</dbReference>
<dbReference type="InterPro" id="IPR013221">
    <property type="entry name" value="Mur_ligase_cen"/>
</dbReference>
<dbReference type="InterPro" id="IPR000713">
    <property type="entry name" value="Mur_ligase_N"/>
</dbReference>
<dbReference type="InterPro" id="IPR050061">
    <property type="entry name" value="MurCDEF_pg_biosynth"/>
</dbReference>
<dbReference type="InterPro" id="IPR005758">
    <property type="entry name" value="UDP-N-AcMur_Ala_ligase_MurC"/>
</dbReference>
<dbReference type="NCBIfam" id="TIGR01082">
    <property type="entry name" value="murC"/>
    <property type="match status" value="1"/>
</dbReference>
<dbReference type="PANTHER" id="PTHR43445:SF3">
    <property type="entry name" value="UDP-N-ACETYLMURAMATE--L-ALANINE LIGASE"/>
    <property type="match status" value="1"/>
</dbReference>
<dbReference type="PANTHER" id="PTHR43445">
    <property type="entry name" value="UDP-N-ACETYLMURAMATE--L-ALANINE LIGASE-RELATED"/>
    <property type="match status" value="1"/>
</dbReference>
<dbReference type="Pfam" id="PF01225">
    <property type="entry name" value="Mur_ligase"/>
    <property type="match status" value="1"/>
</dbReference>
<dbReference type="Pfam" id="PF02875">
    <property type="entry name" value="Mur_ligase_C"/>
    <property type="match status" value="1"/>
</dbReference>
<dbReference type="Pfam" id="PF08245">
    <property type="entry name" value="Mur_ligase_M"/>
    <property type="match status" value="1"/>
</dbReference>
<dbReference type="SUPFAM" id="SSF51984">
    <property type="entry name" value="MurCD N-terminal domain"/>
    <property type="match status" value="1"/>
</dbReference>
<dbReference type="SUPFAM" id="SSF53623">
    <property type="entry name" value="MurD-like peptide ligases, catalytic domain"/>
    <property type="match status" value="1"/>
</dbReference>
<dbReference type="SUPFAM" id="SSF53244">
    <property type="entry name" value="MurD-like peptide ligases, peptide-binding domain"/>
    <property type="match status" value="1"/>
</dbReference>
<gene>
    <name evidence="1" type="primary">murC</name>
    <name type="ordered locus">JJD26997_0680</name>
</gene>
<organism>
    <name type="scientific">Campylobacter jejuni subsp. doylei (strain ATCC BAA-1458 / RM4099 / 269.97)</name>
    <dbReference type="NCBI Taxonomy" id="360109"/>
    <lineage>
        <taxon>Bacteria</taxon>
        <taxon>Pseudomonadati</taxon>
        <taxon>Campylobacterota</taxon>
        <taxon>Epsilonproteobacteria</taxon>
        <taxon>Campylobacterales</taxon>
        <taxon>Campylobacteraceae</taxon>
        <taxon>Campylobacter</taxon>
    </lineage>
</organism>
<keyword id="KW-0067">ATP-binding</keyword>
<keyword id="KW-0131">Cell cycle</keyword>
<keyword id="KW-0132">Cell division</keyword>
<keyword id="KW-0133">Cell shape</keyword>
<keyword id="KW-0961">Cell wall biogenesis/degradation</keyword>
<keyword id="KW-0963">Cytoplasm</keyword>
<keyword id="KW-0436">Ligase</keyword>
<keyword id="KW-0547">Nucleotide-binding</keyword>
<keyword id="KW-0573">Peptidoglycan synthesis</keyword>
<proteinExistence type="inferred from homology"/>
<sequence>MQNIHFIGIGGIGISALARFLKEKGFKISGSDLKESKITKELEKEGVKVSIPHHKDNILNKDLVIYSAAIKEENPEFKYAKELGIKCLSRKEALPLILEDKRVFAVAGAHGKSTTSSILASLLDDASVIIGAILKEFGSNMIYKESQNLIFEADESDSSFLNSNPYLAIVTNAEAEHLDHYGNEVSKLHHAYAEFLDTAKIRVINAEDEFLKNYKNESIKLYPSKDIKNCTMCIENFKPFTSFELKDLGEFKIFGMGYHLALDASLAILAALNFLDIETIGARLKNYQGIKKRFDILHADENLVLIDDYGHHPTEIKATLSAAQEYAKLGGYKKITAIFEPHRYTRLAVNLKEFAKAFEGVDELVILPVYAAGEEPIEIDLKAVFPKALFVENIQREGKFLVASKGQVFEEGLIIGFGAGDISNKLRQKNE</sequence>
<evidence type="ECO:0000255" key="1">
    <source>
        <dbReference type="HAMAP-Rule" id="MF_00046"/>
    </source>
</evidence>
<protein>
    <recommendedName>
        <fullName evidence="1">UDP-N-acetylmuramate--L-alanine ligase</fullName>
        <ecNumber evidence="1">6.3.2.8</ecNumber>
    </recommendedName>
    <alternativeName>
        <fullName evidence="1">UDP-N-acetylmuramoyl-L-alanine synthetase</fullName>
    </alternativeName>
</protein>